<reference key="1">
    <citation type="submission" date="2006-12" db="EMBL/GenBank/DDBJ databases">
        <title>Complete sequence of chromosome 2 of Paracoccus denitrificans PD1222.</title>
        <authorList>
            <person name="Copeland A."/>
            <person name="Lucas S."/>
            <person name="Lapidus A."/>
            <person name="Barry K."/>
            <person name="Detter J.C."/>
            <person name="Glavina del Rio T."/>
            <person name="Hammon N."/>
            <person name="Israni S."/>
            <person name="Dalin E."/>
            <person name="Tice H."/>
            <person name="Pitluck S."/>
            <person name="Munk A.C."/>
            <person name="Brettin T."/>
            <person name="Bruce D."/>
            <person name="Han C."/>
            <person name="Tapia R."/>
            <person name="Gilna P."/>
            <person name="Schmutz J."/>
            <person name="Larimer F."/>
            <person name="Land M."/>
            <person name="Hauser L."/>
            <person name="Kyrpides N."/>
            <person name="Lykidis A."/>
            <person name="Spiro S."/>
            <person name="Richardson D.J."/>
            <person name="Moir J.W.B."/>
            <person name="Ferguson S.J."/>
            <person name="van Spanning R.J.M."/>
            <person name="Richardson P."/>
        </authorList>
    </citation>
    <scope>NUCLEOTIDE SEQUENCE [LARGE SCALE GENOMIC DNA]</scope>
    <source>
        <strain>Pd 1222</strain>
    </source>
</reference>
<keyword id="KW-0012">Acyltransferase</keyword>
<keyword id="KW-0963">Cytoplasm</keyword>
<keyword id="KW-0441">Lipid A biosynthesis</keyword>
<keyword id="KW-0444">Lipid biosynthesis</keyword>
<keyword id="KW-0443">Lipid metabolism</keyword>
<keyword id="KW-1185">Reference proteome</keyword>
<keyword id="KW-0677">Repeat</keyword>
<keyword id="KW-0808">Transferase</keyword>
<gene>
    <name evidence="1" type="primary">lpxA</name>
    <name type="ordered locus">Pden_3907</name>
</gene>
<feature type="chain" id="PRO_1000122717" description="Acyl-[acyl-carrier-protein]--UDP-N-acetylglucosamine O-acyltransferase">
    <location>
        <begin position="1"/>
        <end position="261"/>
    </location>
</feature>
<accession>A1B8X9</accession>
<proteinExistence type="inferred from homology"/>
<evidence type="ECO:0000255" key="1">
    <source>
        <dbReference type="HAMAP-Rule" id="MF_00387"/>
    </source>
</evidence>
<protein>
    <recommendedName>
        <fullName evidence="1">Acyl-[acyl-carrier-protein]--UDP-N-acetylglucosamine O-acyltransferase</fullName>
        <shortName evidence="1">UDP-N-acetylglucosamine acyltransferase</shortName>
        <ecNumber evidence="1">2.3.1.129</ecNumber>
    </recommendedName>
</protein>
<comment type="function">
    <text evidence="1">Involved in the biosynthesis of lipid A, a phosphorylated glycolipid that anchors the lipopolysaccharide to the outer membrane of the cell.</text>
</comment>
<comment type="catalytic activity">
    <reaction evidence="1">
        <text>a (3R)-hydroxyacyl-[ACP] + UDP-N-acetyl-alpha-D-glucosamine = a UDP-3-O-[(3R)-3-hydroxyacyl]-N-acetyl-alpha-D-glucosamine + holo-[ACP]</text>
        <dbReference type="Rhea" id="RHEA:67812"/>
        <dbReference type="Rhea" id="RHEA-COMP:9685"/>
        <dbReference type="Rhea" id="RHEA-COMP:9945"/>
        <dbReference type="ChEBI" id="CHEBI:57705"/>
        <dbReference type="ChEBI" id="CHEBI:64479"/>
        <dbReference type="ChEBI" id="CHEBI:78827"/>
        <dbReference type="ChEBI" id="CHEBI:173225"/>
        <dbReference type="EC" id="2.3.1.129"/>
    </reaction>
</comment>
<comment type="pathway">
    <text evidence="1">Glycolipid biosynthesis; lipid IV(A) biosynthesis; lipid IV(A) from (3R)-3-hydroxytetradecanoyl-[acyl-carrier-protein] and UDP-N-acetyl-alpha-D-glucosamine: step 1/6.</text>
</comment>
<comment type="subunit">
    <text evidence="1">Homotrimer.</text>
</comment>
<comment type="subcellular location">
    <subcellularLocation>
        <location evidence="1">Cytoplasm</location>
    </subcellularLocation>
</comment>
<comment type="similarity">
    <text evidence="1">Belongs to the transferase hexapeptide repeat family. LpxA subfamily.</text>
</comment>
<organism>
    <name type="scientific">Paracoccus denitrificans (strain Pd 1222)</name>
    <dbReference type="NCBI Taxonomy" id="318586"/>
    <lineage>
        <taxon>Bacteria</taxon>
        <taxon>Pseudomonadati</taxon>
        <taxon>Pseudomonadota</taxon>
        <taxon>Alphaproteobacteria</taxon>
        <taxon>Rhodobacterales</taxon>
        <taxon>Paracoccaceae</taxon>
        <taxon>Paracoccus</taxon>
    </lineage>
</organism>
<sequence>MAETRIHPSAVVDPAAQVGEGCEIGPFCVIGPEVGLGRGVVLKSHVVVAGETLIGDETVVFPFASLGEVPQDLKFRGERTRLEIGARNRIREYVTMNPGTEGGGGVTRIGDDGLFMAGSHVAHDCQIGNRVILVNNASVAGHCVLEDDVIVGGLSGVHQFVRIGRGAMIGAVTMVTADVIPFGLVQGPRGHLDGLNLVGLKRRGASREEIHALRDMLAQLGQGSFRDTARHLAEAENGPMVREVLDFILGPSDRSFLAPHP</sequence>
<name>LPXA_PARDP</name>
<dbReference type="EC" id="2.3.1.129" evidence="1"/>
<dbReference type="EMBL" id="CP000490">
    <property type="protein sequence ID" value="ABL71973.1"/>
    <property type="molecule type" value="Genomic_DNA"/>
</dbReference>
<dbReference type="RefSeq" id="WP_011750140.1">
    <property type="nucleotide sequence ID" value="NC_008687.1"/>
</dbReference>
<dbReference type="SMR" id="A1B8X9"/>
<dbReference type="STRING" id="318586.Pden_3907"/>
<dbReference type="EnsemblBacteria" id="ABL71973">
    <property type="protein sequence ID" value="ABL71973"/>
    <property type="gene ID" value="Pden_3907"/>
</dbReference>
<dbReference type="GeneID" id="93453567"/>
<dbReference type="KEGG" id="pde:Pden_3907"/>
<dbReference type="eggNOG" id="COG1043">
    <property type="taxonomic scope" value="Bacteria"/>
</dbReference>
<dbReference type="HOGENOM" id="CLU_061249_0_0_5"/>
<dbReference type="OrthoDB" id="9807278at2"/>
<dbReference type="UniPathway" id="UPA00359">
    <property type="reaction ID" value="UER00477"/>
</dbReference>
<dbReference type="Proteomes" id="UP000000361">
    <property type="component" value="Chromosome 2"/>
</dbReference>
<dbReference type="GO" id="GO:0005737">
    <property type="term" value="C:cytoplasm"/>
    <property type="evidence" value="ECO:0007669"/>
    <property type="project" value="UniProtKB-SubCell"/>
</dbReference>
<dbReference type="GO" id="GO:0016020">
    <property type="term" value="C:membrane"/>
    <property type="evidence" value="ECO:0007669"/>
    <property type="project" value="GOC"/>
</dbReference>
<dbReference type="GO" id="GO:0008780">
    <property type="term" value="F:acyl-[acyl-carrier-protein]-UDP-N-acetylglucosamine O-acyltransferase activity"/>
    <property type="evidence" value="ECO:0007669"/>
    <property type="project" value="UniProtKB-UniRule"/>
</dbReference>
<dbReference type="GO" id="GO:0009245">
    <property type="term" value="P:lipid A biosynthetic process"/>
    <property type="evidence" value="ECO:0007669"/>
    <property type="project" value="UniProtKB-UniRule"/>
</dbReference>
<dbReference type="CDD" id="cd03351">
    <property type="entry name" value="LbH_UDP-GlcNAc_AT"/>
    <property type="match status" value="1"/>
</dbReference>
<dbReference type="Gene3D" id="2.160.10.10">
    <property type="entry name" value="Hexapeptide repeat proteins"/>
    <property type="match status" value="1"/>
</dbReference>
<dbReference type="Gene3D" id="1.20.1180.10">
    <property type="entry name" value="Udp N-acetylglucosamine O-acyltransferase, C-terminal domain"/>
    <property type="match status" value="1"/>
</dbReference>
<dbReference type="HAMAP" id="MF_00387">
    <property type="entry name" value="LpxA"/>
    <property type="match status" value="1"/>
</dbReference>
<dbReference type="InterPro" id="IPR029098">
    <property type="entry name" value="Acetyltransf_C"/>
</dbReference>
<dbReference type="InterPro" id="IPR037157">
    <property type="entry name" value="Acetyltransf_C_sf"/>
</dbReference>
<dbReference type="InterPro" id="IPR018357">
    <property type="entry name" value="Hexapep_transf_CS"/>
</dbReference>
<dbReference type="InterPro" id="IPR010137">
    <property type="entry name" value="Lipid_A_LpxA"/>
</dbReference>
<dbReference type="InterPro" id="IPR011004">
    <property type="entry name" value="Trimer_LpxA-like_sf"/>
</dbReference>
<dbReference type="NCBIfam" id="TIGR01852">
    <property type="entry name" value="lipid_A_lpxA"/>
    <property type="match status" value="1"/>
</dbReference>
<dbReference type="NCBIfam" id="NF003657">
    <property type="entry name" value="PRK05289.1"/>
    <property type="match status" value="1"/>
</dbReference>
<dbReference type="PANTHER" id="PTHR43480">
    <property type="entry name" value="ACYL-[ACYL-CARRIER-PROTEIN]--UDP-N-ACETYLGLUCOSAMINE O-ACYLTRANSFERASE"/>
    <property type="match status" value="1"/>
</dbReference>
<dbReference type="PANTHER" id="PTHR43480:SF1">
    <property type="entry name" value="ACYL-[ACYL-CARRIER-PROTEIN]--UDP-N-ACETYLGLUCOSAMINE O-ACYLTRANSFERASE, MITOCHONDRIAL-RELATED"/>
    <property type="match status" value="1"/>
</dbReference>
<dbReference type="Pfam" id="PF13720">
    <property type="entry name" value="Acetyltransf_11"/>
    <property type="match status" value="1"/>
</dbReference>
<dbReference type="PIRSF" id="PIRSF000456">
    <property type="entry name" value="UDP-GlcNAc_acltr"/>
    <property type="match status" value="1"/>
</dbReference>
<dbReference type="SUPFAM" id="SSF51161">
    <property type="entry name" value="Trimeric LpxA-like enzymes"/>
    <property type="match status" value="1"/>
</dbReference>
<dbReference type="PROSITE" id="PS00101">
    <property type="entry name" value="HEXAPEP_TRANSFERASES"/>
    <property type="match status" value="1"/>
</dbReference>